<accession>Q4WXE6</accession>
<feature type="signal peptide" evidence="3">
    <location>
        <begin position="1"/>
        <end position="19"/>
    </location>
</feature>
<feature type="chain" id="PRO_5004246487" description="Crh-like protein 3" evidence="3">
    <location>
        <begin position="20"/>
        <end position="363"/>
    </location>
</feature>
<feature type="transmembrane region" description="Helical" evidence="3">
    <location>
        <begin position="298"/>
        <end position="318"/>
    </location>
</feature>
<feature type="domain" description="GH16" evidence="5">
    <location>
        <begin position="26"/>
        <end position="237"/>
    </location>
</feature>
<feature type="active site" description="Nucleophile" evidence="1">
    <location>
        <position position="118"/>
    </location>
</feature>
<feature type="active site" description="Proton donor" evidence="1">
    <location>
        <position position="122"/>
    </location>
</feature>
<feature type="binding site" evidence="2">
    <location>
        <position position="122"/>
    </location>
    <ligand>
        <name>chitin</name>
        <dbReference type="ChEBI" id="CHEBI:17029"/>
    </ligand>
</feature>
<feature type="binding site" evidence="2">
    <location>
        <position position="203"/>
    </location>
    <ligand>
        <name>chitin</name>
        <dbReference type="ChEBI" id="CHEBI:17029"/>
    </ligand>
</feature>
<feature type="binding site" evidence="2">
    <location>
        <position position="207"/>
    </location>
    <ligand>
        <name>chitin</name>
        <dbReference type="ChEBI" id="CHEBI:17029"/>
    </ligand>
</feature>
<feature type="binding site" evidence="2">
    <location>
        <position position="218"/>
    </location>
    <ligand>
        <name>chitin</name>
        <dbReference type="ChEBI" id="CHEBI:17029"/>
    </ligand>
</feature>
<feature type="glycosylation site" description="N-linked (GlcNAc...) asparagine" evidence="4">
    <location>
        <position position="41"/>
    </location>
</feature>
<feature type="glycosylation site" description="N-linked (GlcNAc...) asparagine" evidence="4">
    <location>
        <position position="47"/>
    </location>
</feature>
<feature type="glycosylation site" description="N-linked (GlcNAc...) asparagine" evidence="4">
    <location>
        <position position="56"/>
    </location>
</feature>
<feature type="glycosylation site" description="N-linked (GlcNAc...) asparagine" evidence="4">
    <location>
        <position position="127"/>
    </location>
</feature>
<feature type="glycosylation site" description="N-linked (GlcNAc...) asparagine" evidence="4">
    <location>
        <position position="141"/>
    </location>
</feature>
<feature type="glycosylation site" description="N-linked (GlcNAc...) asparagine" evidence="4">
    <location>
        <position position="161"/>
    </location>
</feature>
<feature type="glycosylation site" description="N-linked (GlcNAc...) asparagine" evidence="4">
    <location>
        <position position="252"/>
    </location>
</feature>
<feature type="glycosylation site" description="N-linked (GlcNAc...) asparagine" evidence="4">
    <location>
        <position position="269"/>
    </location>
</feature>
<feature type="disulfide bond" evidence="2">
    <location>
        <begin position="25"/>
        <end position="32"/>
    </location>
</feature>
<gene>
    <name evidence="7" type="primary">crh3</name>
    <name type="ORF">AFUA_3G09250</name>
</gene>
<sequence>MSLLYLVALFVASICSVTAQTWTSCNPLTTTCPPDQALGINTTFTFNKTLDDTIWNVTNGVLSHTDEGTEFTITGENQSPTMQSNFYIFFGIVESHVKMAKGAGIISSIVLQSDDLDEIDWEWVGYNTSEVQSNYFGKGNNETFNRGGYHYVPNADTEFHNYTTYWTQEKLEWWIDGKLARTLTYEDSQGAGKYYPQTPCNIRYGIWPAGIKGNAQGTIEWAGGLVDYSKAPFTMVLQSVRVHDFHTGKEYNYTDHSGSWQSIDVIAGNSTIANAIQNPPKSLSEKWAELPTGAKAGVYIGAGCVGAALLAGFIFFFIAQRKKGRLEHALEDAKWANERTEMSTFQNDWKQSEWKHKGYQPVN</sequence>
<dbReference type="EC" id="3.2.1.14" evidence="9"/>
<dbReference type="EC" id="2.4.-.-" evidence="6"/>
<dbReference type="EMBL" id="AAHF01000002">
    <property type="protein sequence ID" value="EAL92657.2"/>
    <property type="molecule type" value="Genomic_DNA"/>
</dbReference>
<dbReference type="RefSeq" id="XP_754695.2">
    <property type="nucleotide sequence ID" value="XM_749602.2"/>
</dbReference>
<dbReference type="EnsemblFungi" id="EAL92657">
    <property type="protein sequence ID" value="EAL92657"/>
    <property type="gene ID" value="AFUA_3G09250"/>
</dbReference>
<dbReference type="GeneID" id="3511859"/>
<dbReference type="KEGG" id="afm:AFUA_3G09250"/>
<dbReference type="VEuPathDB" id="FungiDB:Afu3g09250"/>
<dbReference type="eggNOG" id="ENOG502QVQI">
    <property type="taxonomic scope" value="Eukaryota"/>
</dbReference>
<dbReference type="HOGENOM" id="CLU_027506_1_1_1"/>
<dbReference type="InParanoid" id="Q4WXE6"/>
<dbReference type="OMA" id="VRLGIWP"/>
<dbReference type="OrthoDB" id="4781at2759"/>
<dbReference type="Proteomes" id="UP000002530">
    <property type="component" value="Chromosome 3"/>
</dbReference>
<dbReference type="GO" id="GO:0005886">
    <property type="term" value="C:plasma membrane"/>
    <property type="evidence" value="ECO:0007669"/>
    <property type="project" value="UniProtKB-SubCell"/>
</dbReference>
<dbReference type="GO" id="GO:0098552">
    <property type="term" value="C:side of membrane"/>
    <property type="evidence" value="ECO:0007669"/>
    <property type="project" value="UniProtKB-KW"/>
</dbReference>
<dbReference type="GO" id="GO:0004553">
    <property type="term" value="F:hydrolase activity, hydrolyzing O-glycosyl compounds"/>
    <property type="evidence" value="ECO:0007669"/>
    <property type="project" value="InterPro"/>
</dbReference>
<dbReference type="GO" id="GO:0005975">
    <property type="term" value="P:carbohydrate metabolic process"/>
    <property type="evidence" value="ECO:0007669"/>
    <property type="project" value="InterPro"/>
</dbReference>
<dbReference type="CDD" id="cd02183">
    <property type="entry name" value="GH16_fungal_CRH1_transglycosylase"/>
    <property type="match status" value="1"/>
</dbReference>
<dbReference type="FunFam" id="2.60.120.200:FF:000152">
    <property type="entry name" value="Cell wall glucanase"/>
    <property type="match status" value="1"/>
</dbReference>
<dbReference type="Gene3D" id="2.60.120.200">
    <property type="match status" value="1"/>
</dbReference>
<dbReference type="InterPro" id="IPR013320">
    <property type="entry name" value="ConA-like_dom_sf"/>
</dbReference>
<dbReference type="InterPro" id="IPR000757">
    <property type="entry name" value="GH16"/>
</dbReference>
<dbReference type="InterPro" id="IPR050546">
    <property type="entry name" value="Glycosyl_Hydrlase_16"/>
</dbReference>
<dbReference type="PANTHER" id="PTHR10963:SF27">
    <property type="entry name" value="GLYCOSIDASE-RELATED"/>
    <property type="match status" value="1"/>
</dbReference>
<dbReference type="PANTHER" id="PTHR10963">
    <property type="entry name" value="GLYCOSYL HYDROLASE-RELATED"/>
    <property type="match status" value="1"/>
</dbReference>
<dbReference type="Pfam" id="PF00722">
    <property type="entry name" value="Glyco_hydro_16"/>
    <property type="match status" value="1"/>
</dbReference>
<dbReference type="SUPFAM" id="SSF49899">
    <property type="entry name" value="Concanavalin A-like lectins/glucanases"/>
    <property type="match status" value="1"/>
</dbReference>
<dbReference type="PROSITE" id="PS51762">
    <property type="entry name" value="GH16_2"/>
    <property type="match status" value="1"/>
</dbReference>
<comment type="function">
    <text evidence="6">Dual chitinase/transglycosylase that plays a role in cell wall architecture (PubMed:30971696). Chitinase and transglycosylase activities are coupled (PubMed:30971696). Required for the polysaccharide cross-linking at the septa and the cell wall (PubMed:30971696). More specifically, transfers chitin to 1,6-beta-glucan in the cell wall (PubMed:30971696).</text>
</comment>
<comment type="catalytic activity">
    <reaction evidence="9">
        <text>Random endo-hydrolysis of N-acetyl-beta-D-glucosaminide (1-&gt;4)-beta-linkages in chitin and chitodextrins.</text>
        <dbReference type="EC" id="3.2.1.14"/>
    </reaction>
</comment>
<comment type="subcellular location">
    <subcellularLocation>
        <location evidence="3">Cell membrane</location>
        <topology evidence="3">Lipid-anchor</topology>
        <topology evidence="3">GPI-anchor</topology>
    </subcellularLocation>
    <subcellularLocation>
        <location evidence="8">Secreted</location>
        <location evidence="8">Cell wall</location>
    </subcellularLocation>
</comment>
<comment type="PTM">
    <text evidence="8">The GPI-like anchor contains a phosphoceramide lipid group. The anchor position has not been determined.</text>
</comment>
<comment type="disruption phenotype">
    <text evidence="6">Does not affect growth rate, germination or sporulation and displays only minor sensitivity to high concentrations of Congo Red, even when all crh family members are deleted.</text>
</comment>
<comment type="similarity">
    <text evidence="8">Belongs to the glycosyl hydrolase 16 family. CRH1 subfamily.</text>
</comment>
<proteinExistence type="inferred from homology"/>
<organism>
    <name type="scientific">Aspergillus fumigatus (strain ATCC MYA-4609 / CBS 101355 / FGSC A1100 / Af293)</name>
    <name type="common">Neosartorya fumigata</name>
    <dbReference type="NCBI Taxonomy" id="330879"/>
    <lineage>
        <taxon>Eukaryota</taxon>
        <taxon>Fungi</taxon>
        <taxon>Dikarya</taxon>
        <taxon>Ascomycota</taxon>
        <taxon>Pezizomycotina</taxon>
        <taxon>Eurotiomycetes</taxon>
        <taxon>Eurotiomycetidae</taxon>
        <taxon>Eurotiales</taxon>
        <taxon>Aspergillaceae</taxon>
        <taxon>Aspergillus</taxon>
        <taxon>Aspergillus subgen. Fumigati</taxon>
    </lineage>
</organism>
<name>CRH3_ASPFU</name>
<protein>
    <recommendedName>
        <fullName evidence="7">Crh-like protein 3</fullName>
    </recommendedName>
    <domain>
        <recommendedName>
            <fullName evidence="7">Chitinase crh3</fullName>
            <ecNumber evidence="9">3.2.1.14</ecNumber>
        </recommendedName>
    </domain>
    <domain>
        <recommendedName>
            <fullName evidence="7">Chitin transglycosylase crh3</fullName>
            <ecNumber evidence="6">2.4.-.-</ecNumber>
        </recommendedName>
    </domain>
</protein>
<evidence type="ECO:0000250" key="1">
    <source>
        <dbReference type="UniProtKB" id="P27051"/>
    </source>
</evidence>
<evidence type="ECO:0000250" key="2">
    <source>
        <dbReference type="UniProtKB" id="Q8J0P4"/>
    </source>
</evidence>
<evidence type="ECO:0000255" key="3"/>
<evidence type="ECO:0000255" key="4">
    <source>
        <dbReference type="PROSITE-ProRule" id="PRU00498"/>
    </source>
</evidence>
<evidence type="ECO:0000255" key="5">
    <source>
        <dbReference type="PROSITE-ProRule" id="PRU01098"/>
    </source>
</evidence>
<evidence type="ECO:0000269" key="6">
    <source>
    </source>
</evidence>
<evidence type="ECO:0000303" key="7">
    <source>
    </source>
</evidence>
<evidence type="ECO:0000305" key="8"/>
<evidence type="ECO:0000305" key="9">
    <source>
    </source>
</evidence>
<reference key="1">
    <citation type="journal article" date="2005" name="Nature">
        <title>Genomic sequence of the pathogenic and allergenic filamentous fungus Aspergillus fumigatus.</title>
        <authorList>
            <person name="Nierman W.C."/>
            <person name="Pain A."/>
            <person name="Anderson M.J."/>
            <person name="Wortman J.R."/>
            <person name="Kim H.S."/>
            <person name="Arroyo J."/>
            <person name="Berriman M."/>
            <person name="Abe K."/>
            <person name="Archer D.B."/>
            <person name="Bermejo C."/>
            <person name="Bennett J.W."/>
            <person name="Bowyer P."/>
            <person name="Chen D."/>
            <person name="Collins M."/>
            <person name="Coulsen R."/>
            <person name="Davies R."/>
            <person name="Dyer P.S."/>
            <person name="Farman M.L."/>
            <person name="Fedorova N."/>
            <person name="Fedorova N.D."/>
            <person name="Feldblyum T.V."/>
            <person name="Fischer R."/>
            <person name="Fosker N."/>
            <person name="Fraser A."/>
            <person name="Garcia J.L."/>
            <person name="Garcia M.J."/>
            <person name="Goble A."/>
            <person name="Goldman G.H."/>
            <person name="Gomi K."/>
            <person name="Griffith-Jones S."/>
            <person name="Gwilliam R."/>
            <person name="Haas B.J."/>
            <person name="Haas H."/>
            <person name="Harris D.E."/>
            <person name="Horiuchi H."/>
            <person name="Huang J."/>
            <person name="Humphray S."/>
            <person name="Jimenez J."/>
            <person name="Keller N."/>
            <person name="Khouri H."/>
            <person name="Kitamoto K."/>
            <person name="Kobayashi T."/>
            <person name="Konzack S."/>
            <person name="Kulkarni R."/>
            <person name="Kumagai T."/>
            <person name="Lafton A."/>
            <person name="Latge J.-P."/>
            <person name="Li W."/>
            <person name="Lord A."/>
            <person name="Lu C."/>
            <person name="Majoros W.H."/>
            <person name="May G.S."/>
            <person name="Miller B.L."/>
            <person name="Mohamoud Y."/>
            <person name="Molina M."/>
            <person name="Monod M."/>
            <person name="Mouyna I."/>
            <person name="Mulligan S."/>
            <person name="Murphy L.D."/>
            <person name="O'Neil S."/>
            <person name="Paulsen I."/>
            <person name="Penalva M.A."/>
            <person name="Pertea M."/>
            <person name="Price C."/>
            <person name="Pritchard B.L."/>
            <person name="Quail M.A."/>
            <person name="Rabbinowitsch E."/>
            <person name="Rawlins N."/>
            <person name="Rajandream M.A."/>
            <person name="Reichard U."/>
            <person name="Renauld H."/>
            <person name="Robson G.D."/>
            <person name="Rodriguez de Cordoba S."/>
            <person name="Rodriguez-Pena J.M."/>
            <person name="Ronning C.M."/>
            <person name="Rutter S."/>
            <person name="Salzberg S.L."/>
            <person name="Sanchez M."/>
            <person name="Sanchez-Ferrero J.C."/>
            <person name="Saunders D."/>
            <person name="Seeger K."/>
            <person name="Squares R."/>
            <person name="Squares S."/>
            <person name="Takeuchi M."/>
            <person name="Tekaia F."/>
            <person name="Turner G."/>
            <person name="Vazquez de Aldana C.R."/>
            <person name="Weidman J."/>
            <person name="White O."/>
            <person name="Woodward J.R."/>
            <person name="Yu J.-H."/>
            <person name="Fraser C.M."/>
            <person name="Galagan J.E."/>
            <person name="Asai K."/>
            <person name="Machida M."/>
            <person name="Hall N."/>
            <person name="Barrell B.G."/>
            <person name="Denning D.W."/>
        </authorList>
    </citation>
    <scope>NUCLEOTIDE SEQUENCE [LARGE SCALE GENOMIC DNA]</scope>
    <source>
        <strain>ATCC MYA-4609 / CBS 101355 / FGSC A1100 / Af293</strain>
    </source>
</reference>
<reference key="2">
    <citation type="journal article" date="2019" name="Nat. Commun.">
        <title>Mechanisms of redundancy and specificity of the Aspergillus fumigatus Crh transglycosylases.</title>
        <authorList>
            <person name="Fang W."/>
            <person name="Sanz A.B."/>
            <person name="Bartual S.G."/>
            <person name="Wang B."/>
            <person name="Ferenbach A.T."/>
            <person name="Farkas V."/>
            <person name="Hurtado-Guerrero R."/>
            <person name="Arroyo J."/>
            <person name="van Aalten D.M.F."/>
        </authorList>
    </citation>
    <scope>FUNCTION</scope>
    <scope>DISRUPTION PHENOTYPE</scope>
</reference>
<keyword id="KW-1003">Cell membrane</keyword>
<keyword id="KW-0134">Cell wall</keyword>
<keyword id="KW-0961">Cell wall biogenesis/degradation</keyword>
<keyword id="KW-1015">Disulfide bond</keyword>
<keyword id="KW-0325">Glycoprotein</keyword>
<keyword id="KW-0326">Glycosidase</keyword>
<keyword id="KW-0328">Glycosyltransferase</keyword>
<keyword id="KW-0336">GPI-anchor</keyword>
<keyword id="KW-0378">Hydrolase</keyword>
<keyword id="KW-0449">Lipoprotein</keyword>
<keyword id="KW-0472">Membrane</keyword>
<keyword id="KW-1185">Reference proteome</keyword>
<keyword id="KW-0964">Secreted</keyword>
<keyword id="KW-0732">Signal</keyword>
<keyword id="KW-0808">Transferase</keyword>
<keyword id="KW-0812">Transmembrane</keyword>
<keyword id="KW-1133">Transmembrane helix</keyword>